<keyword id="KW-1003">Cell membrane</keyword>
<keyword id="KW-0350">Heme biosynthesis</keyword>
<keyword id="KW-0472">Membrane</keyword>
<keyword id="KW-1185">Reference proteome</keyword>
<keyword id="KW-0808">Transferase</keyword>
<keyword id="KW-0812">Transmembrane</keyword>
<keyword id="KW-1133">Transmembrane helix</keyword>
<proteinExistence type="evidence at protein level"/>
<dbReference type="EC" id="2.5.1.141" evidence="3"/>
<dbReference type="EMBL" id="X54140">
    <property type="protein sequence ID" value="CAA38075.1"/>
    <property type="molecule type" value="Genomic_DNA"/>
</dbReference>
<dbReference type="EMBL" id="Z98682">
    <property type="protein sequence ID" value="CAB11341.1"/>
    <property type="molecule type" value="Genomic_DNA"/>
</dbReference>
<dbReference type="EMBL" id="AL009126">
    <property type="protein sequence ID" value="CAB13361.1"/>
    <property type="molecule type" value="Genomic_DNA"/>
</dbReference>
<dbReference type="PIR" id="C69609">
    <property type="entry name" value="C69609"/>
</dbReference>
<dbReference type="SMR" id="P24009"/>
<dbReference type="FunCoup" id="P24009">
    <property type="interactions" value="735"/>
</dbReference>
<dbReference type="IntAct" id="P24009">
    <property type="interactions" value="9"/>
</dbReference>
<dbReference type="STRING" id="224308.BSU14880"/>
<dbReference type="PaxDb" id="224308-BSU14880"/>
<dbReference type="EnsemblBacteria" id="CAB13361">
    <property type="protein sequence ID" value="CAB13361"/>
    <property type="gene ID" value="BSU_14880"/>
</dbReference>
<dbReference type="GeneID" id="935922"/>
<dbReference type="KEGG" id="bsu:BSU14880"/>
<dbReference type="PATRIC" id="fig|224308.179.peg.1622"/>
<dbReference type="eggNOG" id="COG0109">
    <property type="taxonomic scope" value="Bacteria"/>
</dbReference>
<dbReference type="InParanoid" id="P24009"/>
<dbReference type="OrthoDB" id="9814417at2"/>
<dbReference type="PhylomeDB" id="P24009"/>
<dbReference type="BioCyc" id="BSUB:BSU14880-MONOMER"/>
<dbReference type="BioCyc" id="MetaCyc:BSU14880-MONOMER"/>
<dbReference type="BRENDA" id="2.5.1.141">
    <property type="organism ID" value="658"/>
</dbReference>
<dbReference type="UniPathway" id="UPA00834">
    <property type="reaction ID" value="UER00712"/>
</dbReference>
<dbReference type="Proteomes" id="UP000001570">
    <property type="component" value="Chromosome"/>
</dbReference>
<dbReference type="GO" id="GO:0005886">
    <property type="term" value="C:plasma membrane"/>
    <property type="evidence" value="ECO:0000318"/>
    <property type="project" value="GO_Central"/>
</dbReference>
<dbReference type="GO" id="GO:0008495">
    <property type="term" value="F:protoheme IX farnesyltransferase activity"/>
    <property type="evidence" value="ECO:0000318"/>
    <property type="project" value="GO_Central"/>
</dbReference>
<dbReference type="GO" id="GO:0048034">
    <property type="term" value="P:heme O biosynthetic process"/>
    <property type="evidence" value="ECO:0000318"/>
    <property type="project" value="GO_Central"/>
</dbReference>
<dbReference type="CDD" id="cd13957">
    <property type="entry name" value="PT_UbiA_Cox10"/>
    <property type="match status" value="1"/>
</dbReference>
<dbReference type="FunFam" id="1.10.357.140:FF:000001">
    <property type="entry name" value="Protoheme IX farnesyltransferase"/>
    <property type="match status" value="1"/>
</dbReference>
<dbReference type="Gene3D" id="1.10.357.140">
    <property type="entry name" value="UbiA prenyltransferase"/>
    <property type="match status" value="1"/>
</dbReference>
<dbReference type="HAMAP" id="MF_00154">
    <property type="entry name" value="CyoE_CtaB"/>
    <property type="match status" value="1"/>
</dbReference>
<dbReference type="InterPro" id="IPR006369">
    <property type="entry name" value="Protohaem_IX_farnesylTrfase"/>
</dbReference>
<dbReference type="InterPro" id="IPR000537">
    <property type="entry name" value="UbiA_prenyltransferase"/>
</dbReference>
<dbReference type="InterPro" id="IPR030470">
    <property type="entry name" value="UbiA_prenylTrfase_CS"/>
</dbReference>
<dbReference type="InterPro" id="IPR044878">
    <property type="entry name" value="UbiA_sf"/>
</dbReference>
<dbReference type="NCBIfam" id="TIGR01473">
    <property type="entry name" value="cyoE_ctaB"/>
    <property type="match status" value="1"/>
</dbReference>
<dbReference type="PANTHER" id="PTHR43448">
    <property type="entry name" value="PROTOHEME IX FARNESYLTRANSFERASE, MITOCHONDRIAL"/>
    <property type="match status" value="1"/>
</dbReference>
<dbReference type="PANTHER" id="PTHR43448:SF2">
    <property type="entry name" value="PROTOHEME IX FARNESYLTRANSFERASE, MITOCHONDRIAL"/>
    <property type="match status" value="1"/>
</dbReference>
<dbReference type="Pfam" id="PF01040">
    <property type="entry name" value="UbiA"/>
    <property type="match status" value="1"/>
</dbReference>
<dbReference type="PROSITE" id="PS00943">
    <property type="entry name" value="UBIA"/>
    <property type="match status" value="1"/>
</dbReference>
<comment type="function">
    <text evidence="3">Converts heme B (protoheme IX) to heme O by substitution of the vinyl group on carbon 2 of heme B porphyrin ring with a hydroxyethyl farnesyl side group.</text>
</comment>
<comment type="catalytic activity">
    <reaction evidence="3">
        <text>heme b + (2E,6E)-farnesyl diphosphate + H2O = Fe(II)-heme o + diphosphate</text>
        <dbReference type="Rhea" id="RHEA:28070"/>
        <dbReference type="ChEBI" id="CHEBI:15377"/>
        <dbReference type="ChEBI" id="CHEBI:33019"/>
        <dbReference type="ChEBI" id="CHEBI:60344"/>
        <dbReference type="ChEBI" id="CHEBI:60530"/>
        <dbReference type="ChEBI" id="CHEBI:175763"/>
        <dbReference type="EC" id="2.5.1.141"/>
    </reaction>
</comment>
<comment type="pathway">
    <text>Porphyrin-containing compound metabolism; heme O biosynthesis; heme O from protoheme: step 1/1.</text>
</comment>
<comment type="subunit">
    <text evidence="2">Interacts with CtaA.</text>
</comment>
<comment type="subcellular location">
    <subcellularLocation>
        <location>Cell membrane</location>
        <topology>Multi-pass membrane protein</topology>
    </subcellularLocation>
</comment>
<comment type="miscellaneous">
    <text>Carbon 2 of the heme B porphyrin ring is defined according to the Fischer nomenclature.</text>
</comment>
<comment type="similarity">
    <text evidence="4">Belongs to the UbiA prenyltransferase family. Protoheme IX farnesyltransferase subfamily.</text>
</comment>
<evidence type="ECO:0000255" key="1"/>
<evidence type="ECO:0000269" key="2">
    <source>
    </source>
</evidence>
<evidence type="ECO:0000269" key="3">
    <source>
    </source>
</evidence>
<evidence type="ECO:0000305" key="4"/>
<sequence>MANSRILNDTAIDGQIEETTAWKDFLSLIKIGIVNSNLITTFTGMWLALHISGLSFLGNINTVLLTLIGSSLIIAGSCAINNWYDRDIDHLMERTKVRPTVTGKIQPSQALWSGILLVALGLIMLLMTTVMAAVIGFIGVFTYVVLYTMWTKRRYTINTVVGSVSGAVPPLIGWTAVEGNIGVVAWVLFMILFIWQIPHFLALAIKKTEDYRAANIPMLPVVYGFEVTKRQIIVWVACLMPLPFFLGSLGLPIVILGLLLNIGWLILGLMGFRSKNIMKWATQMFVYSLNYMTIYFVAMVVLTLF</sequence>
<protein>
    <recommendedName>
        <fullName>Protoheme IX farnesyltransferase 2</fullName>
        <ecNumber evidence="3">2.5.1.141</ecNumber>
    </recommendedName>
    <alternativeName>
        <fullName>Heme B farnesyltransferase 2</fullName>
    </alternativeName>
    <alternativeName>
        <fullName>Heme O synthase 2</fullName>
    </alternativeName>
</protein>
<reference key="1">
    <citation type="journal article" date="1991" name="Eur. J. Biochem.">
        <title>The Bacillus subtilis cytochrome-c oxidase. Variations on a conserved protein theme.</title>
        <authorList>
            <person name="Saraste M."/>
            <person name="Metso T."/>
            <person name="Nakari T."/>
            <person name="Jalli T."/>
            <person name="Lauraeus M."/>
            <person name="van der Oost J."/>
        </authorList>
    </citation>
    <scope>NUCLEOTIDE SEQUENCE [GENOMIC DNA]</scope>
    <source>
        <strain>168</strain>
    </source>
</reference>
<reference key="2">
    <citation type="submission" date="1995-09" db="EMBL/GenBank/DDBJ databases">
        <authorList>
            <person name="Hederstedt L."/>
        </authorList>
    </citation>
    <scope>SEQUENCE REVISION TO 46-47 AND 221</scope>
</reference>
<reference key="3">
    <citation type="submission" date="1997-08" db="EMBL/GenBank/DDBJ databases">
        <title>Bacillus subtilis chromosomal region downstream nprE.</title>
        <authorList>
            <person name="Bertero M."/>
            <person name="Presecan E."/>
            <person name="Glaser P."/>
            <person name="Richou A."/>
            <person name="Danchin A."/>
        </authorList>
    </citation>
    <scope>NUCLEOTIDE SEQUENCE [GENOMIC DNA]</scope>
    <source>
        <strain>168</strain>
    </source>
</reference>
<reference key="4">
    <citation type="journal article" date="1997" name="Nature">
        <title>The complete genome sequence of the Gram-positive bacterium Bacillus subtilis.</title>
        <authorList>
            <person name="Kunst F."/>
            <person name="Ogasawara N."/>
            <person name="Moszer I."/>
            <person name="Albertini A.M."/>
            <person name="Alloni G."/>
            <person name="Azevedo V."/>
            <person name="Bertero M.G."/>
            <person name="Bessieres P."/>
            <person name="Bolotin A."/>
            <person name="Borchert S."/>
            <person name="Borriss R."/>
            <person name="Boursier L."/>
            <person name="Brans A."/>
            <person name="Braun M."/>
            <person name="Brignell S.C."/>
            <person name="Bron S."/>
            <person name="Brouillet S."/>
            <person name="Bruschi C.V."/>
            <person name="Caldwell B."/>
            <person name="Capuano V."/>
            <person name="Carter N.M."/>
            <person name="Choi S.-K."/>
            <person name="Codani J.-J."/>
            <person name="Connerton I.F."/>
            <person name="Cummings N.J."/>
            <person name="Daniel R.A."/>
            <person name="Denizot F."/>
            <person name="Devine K.M."/>
            <person name="Duesterhoeft A."/>
            <person name="Ehrlich S.D."/>
            <person name="Emmerson P.T."/>
            <person name="Entian K.-D."/>
            <person name="Errington J."/>
            <person name="Fabret C."/>
            <person name="Ferrari E."/>
            <person name="Foulger D."/>
            <person name="Fritz C."/>
            <person name="Fujita M."/>
            <person name="Fujita Y."/>
            <person name="Fuma S."/>
            <person name="Galizzi A."/>
            <person name="Galleron N."/>
            <person name="Ghim S.-Y."/>
            <person name="Glaser P."/>
            <person name="Goffeau A."/>
            <person name="Golightly E.J."/>
            <person name="Grandi G."/>
            <person name="Guiseppi G."/>
            <person name="Guy B.J."/>
            <person name="Haga K."/>
            <person name="Haiech J."/>
            <person name="Harwood C.R."/>
            <person name="Henaut A."/>
            <person name="Hilbert H."/>
            <person name="Holsappel S."/>
            <person name="Hosono S."/>
            <person name="Hullo M.-F."/>
            <person name="Itaya M."/>
            <person name="Jones L.-M."/>
            <person name="Joris B."/>
            <person name="Karamata D."/>
            <person name="Kasahara Y."/>
            <person name="Klaerr-Blanchard M."/>
            <person name="Klein C."/>
            <person name="Kobayashi Y."/>
            <person name="Koetter P."/>
            <person name="Koningstein G."/>
            <person name="Krogh S."/>
            <person name="Kumano M."/>
            <person name="Kurita K."/>
            <person name="Lapidus A."/>
            <person name="Lardinois S."/>
            <person name="Lauber J."/>
            <person name="Lazarevic V."/>
            <person name="Lee S.-M."/>
            <person name="Levine A."/>
            <person name="Liu H."/>
            <person name="Masuda S."/>
            <person name="Mauel C."/>
            <person name="Medigue C."/>
            <person name="Medina N."/>
            <person name="Mellado R.P."/>
            <person name="Mizuno M."/>
            <person name="Moestl D."/>
            <person name="Nakai S."/>
            <person name="Noback M."/>
            <person name="Noone D."/>
            <person name="O'Reilly M."/>
            <person name="Ogawa K."/>
            <person name="Ogiwara A."/>
            <person name="Oudega B."/>
            <person name="Park S.-H."/>
            <person name="Parro V."/>
            <person name="Pohl T.M."/>
            <person name="Portetelle D."/>
            <person name="Porwollik S."/>
            <person name="Prescott A.M."/>
            <person name="Presecan E."/>
            <person name="Pujic P."/>
            <person name="Purnelle B."/>
            <person name="Rapoport G."/>
            <person name="Rey M."/>
            <person name="Reynolds S."/>
            <person name="Rieger M."/>
            <person name="Rivolta C."/>
            <person name="Rocha E."/>
            <person name="Roche B."/>
            <person name="Rose M."/>
            <person name="Sadaie Y."/>
            <person name="Sato T."/>
            <person name="Scanlan E."/>
            <person name="Schleich S."/>
            <person name="Schroeter R."/>
            <person name="Scoffone F."/>
            <person name="Sekiguchi J."/>
            <person name="Sekowska A."/>
            <person name="Seror S.J."/>
            <person name="Serror P."/>
            <person name="Shin B.-S."/>
            <person name="Soldo B."/>
            <person name="Sorokin A."/>
            <person name="Tacconi E."/>
            <person name="Takagi T."/>
            <person name="Takahashi H."/>
            <person name="Takemaru K."/>
            <person name="Takeuchi M."/>
            <person name="Tamakoshi A."/>
            <person name="Tanaka T."/>
            <person name="Terpstra P."/>
            <person name="Tognoni A."/>
            <person name="Tosato V."/>
            <person name="Uchiyama S."/>
            <person name="Vandenbol M."/>
            <person name="Vannier F."/>
            <person name="Vassarotti A."/>
            <person name="Viari A."/>
            <person name="Wambutt R."/>
            <person name="Wedler E."/>
            <person name="Wedler H."/>
            <person name="Weitzenegger T."/>
            <person name="Winters P."/>
            <person name="Wipat A."/>
            <person name="Yamamoto H."/>
            <person name="Yamane K."/>
            <person name="Yasumoto K."/>
            <person name="Yata K."/>
            <person name="Yoshida K."/>
            <person name="Yoshikawa H.-F."/>
            <person name="Zumstein E."/>
            <person name="Yoshikawa H."/>
            <person name="Danchin A."/>
        </authorList>
    </citation>
    <scope>NUCLEOTIDE SEQUENCE [LARGE SCALE GENOMIC DNA]</scope>
    <source>
        <strain>168</strain>
    </source>
</reference>
<reference key="5">
    <citation type="journal article" date="2004" name="Biochemistry">
        <title>Heme O synthase and heme A synthase from Bacillus subtilis and Rhodobacter sphaeroides interact in Escherichia coli.</title>
        <authorList>
            <person name="Brown B.M."/>
            <person name="Wang Z."/>
            <person name="Brown K.R."/>
            <person name="Cricco J.A."/>
            <person name="Hegg E.L."/>
        </authorList>
    </citation>
    <scope>INTERACTION WITH CTAA</scope>
</reference>
<reference key="6">
    <citation type="journal article" date="2009" name="J. Biochem.">
        <title>Over-expression and characterization of Bacillus subtilis heme O synthase.</title>
        <authorList>
            <person name="Mogi T."/>
        </authorList>
    </citation>
    <scope>FUNCTION</scope>
    <scope>CATALYTIC ACTIVITY</scope>
    <scope>MUTAGENESIS OF HIS-199</scope>
</reference>
<gene>
    <name type="primary">ctaB2</name>
    <name type="ordered locus">BSU14880</name>
</gene>
<accession>P24009</accession>
<name>COXX2_BACSU</name>
<feature type="chain" id="PRO_0000162905" description="Protoheme IX farnesyltransferase 2">
    <location>
        <begin position="1"/>
        <end position="305"/>
    </location>
</feature>
<feature type="transmembrane region" description="Helical" evidence="1">
    <location>
        <begin position="38"/>
        <end position="58"/>
    </location>
</feature>
<feature type="transmembrane region" description="Helical" evidence="1">
    <location>
        <begin position="60"/>
        <end position="80"/>
    </location>
</feature>
<feature type="transmembrane region" description="Helical" evidence="1">
    <location>
        <begin position="115"/>
        <end position="135"/>
    </location>
</feature>
<feature type="transmembrane region" description="Helical" evidence="1">
    <location>
        <begin position="157"/>
        <end position="177"/>
    </location>
</feature>
<feature type="transmembrane region" description="Helical" evidence="1">
    <location>
        <begin position="181"/>
        <end position="201"/>
    </location>
</feature>
<feature type="transmembrane region" description="Helical" evidence="1">
    <location>
        <begin position="227"/>
        <end position="247"/>
    </location>
</feature>
<feature type="transmembrane region" description="Helical" evidence="1">
    <location>
        <begin position="249"/>
        <end position="269"/>
    </location>
</feature>
<feature type="transmembrane region" description="Helical" evidence="1">
    <location>
        <begin position="285"/>
        <end position="305"/>
    </location>
</feature>
<feature type="mutagenesis site" description="Loss of enzymatic activity." evidence="3">
    <original>H</original>
    <variation>A</variation>
    <location>
        <position position="199"/>
    </location>
</feature>
<organism>
    <name type="scientific">Bacillus subtilis (strain 168)</name>
    <dbReference type="NCBI Taxonomy" id="224308"/>
    <lineage>
        <taxon>Bacteria</taxon>
        <taxon>Bacillati</taxon>
        <taxon>Bacillota</taxon>
        <taxon>Bacilli</taxon>
        <taxon>Bacillales</taxon>
        <taxon>Bacillaceae</taxon>
        <taxon>Bacillus</taxon>
    </lineage>
</organism>